<accession>A8AF35</accession>
<comment type="function">
    <text evidence="1 4">Acts as a zinc chaperone in the AztABCD zinc transport system (By similarity). Directly transfers one zinc cation to the solute binding protein AztC; the transfer occurs without the formation of a stable interaction (By similarity). Binds 3 Zn(2+), two with high affinity and one with low affinity, and transfers only Zn(2+) bound to site 2 to AztC (PubMed:31428696).</text>
</comment>
<comment type="subunit">
    <text evidence="4">Monomer.</text>
</comment>
<comment type="subcellular location">
    <subcellularLocation>
        <location evidence="4">Periplasm</location>
    </subcellularLocation>
</comment>
<dbReference type="EMBL" id="CP000822">
    <property type="protein sequence ID" value="ABV12098.1"/>
    <property type="molecule type" value="Genomic_DNA"/>
</dbReference>
<dbReference type="PDB" id="6CMK">
    <property type="method" value="X-ray"/>
    <property type="resolution" value="1.73 A"/>
    <property type="chains" value="A/B=1-421"/>
</dbReference>
<dbReference type="PDB" id="6N01">
    <property type="method" value="X-ray"/>
    <property type="resolution" value="1.98 A"/>
    <property type="chains" value="A/B/C/D=1-421"/>
</dbReference>
<dbReference type="PDBsum" id="6CMK"/>
<dbReference type="PDBsum" id="6N01"/>
<dbReference type="SMR" id="A8AF35"/>
<dbReference type="STRING" id="290338.CKO_00948"/>
<dbReference type="KEGG" id="cko:CKO_00948"/>
<dbReference type="HOGENOM" id="CLU_046994_1_0_6"/>
<dbReference type="Proteomes" id="UP000008148">
    <property type="component" value="Chromosome"/>
</dbReference>
<dbReference type="GO" id="GO:0042597">
    <property type="term" value="C:periplasmic space"/>
    <property type="evidence" value="ECO:0007669"/>
    <property type="project" value="UniProtKB-SubCell"/>
</dbReference>
<dbReference type="GO" id="GO:0046872">
    <property type="term" value="F:metal ion binding"/>
    <property type="evidence" value="ECO:0007669"/>
    <property type="project" value="UniProtKB-KW"/>
</dbReference>
<dbReference type="Gene3D" id="2.130.10.10">
    <property type="entry name" value="YVTN repeat-like/Quinoprotein amine dehydrogenase"/>
    <property type="match status" value="1"/>
</dbReference>
<dbReference type="InterPro" id="IPR047697">
    <property type="entry name" value="AztD-like"/>
</dbReference>
<dbReference type="InterPro" id="IPR011045">
    <property type="entry name" value="N2O_reductase_N"/>
</dbReference>
<dbReference type="InterPro" id="IPR015943">
    <property type="entry name" value="WD40/YVTN_repeat-like_dom_sf"/>
</dbReference>
<dbReference type="NCBIfam" id="NF038015">
    <property type="entry name" value="AztD"/>
    <property type="match status" value="1"/>
</dbReference>
<dbReference type="SUPFAM" id="SSF50974">
    <property type="entry name" value="Nitrous oxide reductase, N-terminal domain"/>
    <property type="match status" value="1"/>
</dbReference>
<proteinExistence type="evidence at protein level"/>
<keyword id="KW-0002">3D-structure</keyword>
<keyword id="KW-0143">Chaperone</keyword>
<keyword id="KW-1015">Disulfide bond</keyword>
<keyword id="KW-0479">Metal-binding</keyword>
<keyword id="KW-0574">Periplasm</keyword>
<keyword id="KW-1185">Reference proteome</keyword>
<keyword id="KW-0732">Signal</keyword>
<keyword id="KW-0813">Transport</keyword>
<keyword id="KW-0862">Zinc</keyword>
<protein>
    <recommendedName>
        <fullName evidence="1">Zinc chaperone AztD</fullName>
    </recommendedName>
</protein>
<sequence length="421" mass="45405">MMENIMKKRLLSTSISTLLLGLSVMPAFADEDVTAWRLFIADHDKPVVNVIDALDGDKLATFNVKGPANLSRSESGATIFAIQGSAGVVSTIASGIAFHDHGDHADIDIDAPKLLPLELTGKKPGHFVERQGKIAQWFDGEDSAQILGESAVLKGQKNITKVNVVAPHHGVAVPYDNYAVVSIPNPDDASKRPVGARVVDLQGKKVGDDALCPGLHGSAGSGDTFALSCETGLLLITQKNAAPVIRHLPYAKTLPEGSTSTLIGGKGMQYFIGNYGPDRIILVDPTESDSFRLIQLPTRRVHFVVDPVRAKFAYVFTEDGKLNQIDVLKGEISQSVRVTDPYSMDGHWNDPRPRIAVADNKIYVTDPLKSKIIVLDATSFKKTSEISVEGQPFNIVAVGGSGKVHGEHHDHEAHHHDDHAH</sequence>
<reference evidence="8" key="1">
    <citation type="submission" date="2007-08" db="EMBL/GenBank/DDBJ databases">
        <authorList>
            <consortium name="The Citrobacter koseri Genome Sequencing Project"/>
            <person name="McClelland M."/>
            <person name="Sanderson E.K."/>
            <person name="Porwollik S."/>
            <person name="Spieth J."/>
            <person name="Clifton W.S."/>
            <person name="Latreille P."/>
            <person name="Courtney L."/>
            <person name="Wang C."/>
            <person name="Pepin K."/>
            <person name="Bhonagiri V."/>
            <person name="Nash W."/>
            <person name="Johnson M."/>
            <person name="Thiruvilangam P."/>
            <person name="Wilson R."/>
        </authorList>
    </citation>
    <scope>NUCLEOTIDE SEQUENCE [LARGE SCALE GENOMIC DNA]</scope>
    <source>
        <strain evidence="8">ATCC BAA-895 / CDC 4225-83 / SGSC4696</strain>
    </source>
</reference>
<reference evidence="9 10" key="2">
    <citation type="journal article" date="2019" name="Commun. Biol.">
        <title>Crystal structures of AztD provide mechanistic insights into direct zinc transfer between proteins.</title>
        <authorList>
            <person name="Neupane D.P."/>
            <person name="Fullam S.H."/>
            <person name="Chacon K.N."/>
            <person name="Yukl E.T."/>
        </authorList>
    </citation>
    <scope>X-RAY CRYSTALLOGRAPHY (1.98 ANGSTROMS) IN COMPLEX WITH ZINC</scope>
    <scope>FUNCTION</scope>
    <scope>SUBUNIT</scope>
    <scope>SUBCELLULAR LOCATION</scope>
    <scope>DISULFIDE BOND</scope>
</reference>
<feature type="signal peptide" evidence="2">
    <location>
        <begin position="1"/>
        <end position="29"/>
    </location>
</feature>
<feature type="chain" id="PRO_5002718986" description="Zinc chaperone AztD" evidence="2">
    <location>
        <begin position="30"/>
        <end position="421"/>
    </location>
</feature>
<feature type="region of interest" description="Disordered" evidence="3">
    <location>
        <begin position="399"/>
        <end position="421"/>
    </location>
</feature>
<feature type="short sequence motif" description="N-terminal Zn(2+)-binding motif; binds a third Zn(2+) with low affinity" evidence="6">
    <location>
        <begin position="408"/>
        <end position="419"/>
    </location>
</feature>
<feature type="compositionally biased region" description="Basic and acidic residues" evidence="3">
    <location>
        <begin position="404"/>
        <end position="421"/>
    </location>
</feature>
<feature type="binding site" evidence="4 9">
    <location>
        <position position="101"/>
    </location>
    <ligand>
        <name>Zn(2+)</name>
        <dbReference type="ChEBI" id="CHEBI:29105"/>
        <label>2</label>
        <note>high affinity</note>
    </ligand>
</feature>
<feature type="binding site" evidence="4 9">
    <location>
        <position position="104"/>
    </location>
    <ligand>
        <name>Zn(2+)</name>
        <dbReference type="ChEBI" id="CHEBI:29105"/>
        <label>2</label>
        <note>high affinity</note>
    </ligand>
</feature>
<feature type="binding site" evidence="4 9">
    <location>
        <position position="106"/>
    </location>
    <ligand>
        <name>Zn(2+)</name>
        <dbReference type="ChEBI" id="CHEBI:29105"/>
        <label>2</label>
        <note>high affinity</note>
    </ligand>
</feature>
<feature type="binding site" evidence="4 9">
    <location>
        <position position="126"/>
    </location>
    <ligand>
        <name>Zn(2+)</name>
        <dbReference type="ChEBI" id="CHEBI:29105"/>
        <label>1</label>
        <note>high affinity</note>
    </ligand>
</feature>
<feature type="binding site" evidence="4 9">
    <location>
        <position position="169"/>
    </location>
    <ligand>
        <name>Zn(2+)</name>
        <dbReference type="ChEBI" id="CHEBI:29105"/>
        <label>1</label>
        <note>high affinity</note>
    </ligand>
</feature>
<feature type="binding site" evidence="4 9">
    <location>
        <position position="216"/>
    </location>
    <ligand>
        <name>Zn(2+)</name>
        <dbReference type="ChEBI" id="CHEBI:29105"/>
        <label>1</label>
        <note>high affinity</note>
    </ligand>
</feature>
<feature type="binding site" evidence="4 9">
    <location>
        <position position="405"/>
    </location>
    <ligand>
        <name>Zn(2+)</name>
        <dbReference type="ChEBI" id="CHEBI:29105"/>
        <label>2</label>
        <note>high affinity</note>
    </ligand>
</feature>
<feature type="disulfide bond" evidence="4 9 10">
    <location>
        <begin position="212"/>
        <end position="229"/>
    </location>
</feature>
<feature type="strand" evidence="11">
    <location>
        <begin position="34"/>
        <end position="52"/>
    </location>
</feature>
<feature type="turn" evidence="11">
    <location>
        <begin position="53"/>
        <end position="55"/>
    </location>
</feature>
<feature type="strand" evidence="11">
    <location>
        <begin position="58"/>
        <end position="63"/>
    </location>
</feature>
<feature type="strand" evidence="11">
    <location>
        <begin position="69"/>
        <end position="72"/>
    </location>
</feature>
<feature type="strand" evidence="11">
    <location>
        <begin position="74"/>
        <end position="83"/>
    </location>
</feature>
<feature type="turn" evidence="11">
    <location>
        <begin position="84"/>
        <end position="87"/>
    </location>
</feature>
<feature type="strand" evidence="11">
    <location>
        <begin position="88"/>
        <end position="93"/>
    </location>
</feature>
<feature type="strand" evidence="11">
    <location>
        <begin position="95"/>
        <end position="103"/>
    </location>
</feature>
<feature type="strand" evidence="11">
    <location>
        <begin position="105"/>
        <end position="109"/>
    </location>
</feature>
<feature type="strand" evidence="11">
    <location>
        <begin position="113"/>
        <end position="120"/>
    </location>
</feature>
<feature type="strand" evidence="11">
    <location>
        <begin position="122"/>
        <end position="130"/>
    </location>
</feature>
<feature type="strand" evidence="11">
    <location>
        <begin position="133"/>
        <end position="138"/>
    </location>
</feature>
<feature type="strand" evidence="11">
    <location>
        <begin position="141"/>
        <end position="148"/>
    </location>
</feature>
<feature type="helix" evidence="11">
    <location>
        <begin position="149"/>
        <end position="153"/>
    </location>
</feature>
<feature type="strand" evidence="11">
    <location>
        <begin position="160"/>
        <end position="163"/>
    </location>
</feature>
<feature type="strand" evidence="11">
    <location>
        <begin position="172"/>
        <end position="174"/>
    </location>
</feature>
<feature type="strand" evidence="11">
    <location>
        <begin position="176"/>
        <end position="183"/>
    </location>
</feature>
<feature type="strand" evidence="12">
    <location>
        <begin position="189"/>
        <end position="191"/>
    </location>
</feature>
<feature type="strand" evidence="11">
    <location>
        <begin position="195"/>
        <end position="200"/>
    </location>
</feature>
<feature type="strand" evidence="11">
    <location>
        <begin position="205"/>
        <end position="211"/>
    </location>
</feature>
<feature type="strand" evidence="11">
    <location>
        <begin position="218"/>
        <end position="221"/>
    </location>
</feature>
<feature type="strand" evidence="11">
    <location>
        <begin position="224"/>
        <end position="228"/>
    </location>
</feature>
<feature type="strand" evidence="11">
    <location>
        <begin position="230"/>
        <end position="237"/>
    </location>
</feature>
<feature type="strand" evidence="11">
    <location>
        <begin position="239"/>
        <end position="242"/>
    </location>
</feature>
<feature type="strand" evidence="11">
    <location>
        <begin position="244"/>
        <end position="249"/>
    </location>
</feature>
<feature type="strand" evidence="11">
    <location>
        <begin position="262"/>
        <end position="264"/>
    </location>
</feature>
<feature type="strand" evidence="11">
    <location>
        <begin position="266"/>
        <end position="268"/>
    </location>
</feature>
<feature type="strand" evidence="11">
    <location>
        <begin position="271"/>
        <end position="276"/>
    </location>
</feature>
<feature type="strand" evidence="11">
    <location>
        <begin position="279"/>
        <end position="283"/>
    </location>
</feature>
<feature type="strand" evidence="11">
    <location>
        <begin position="287"/>
        <end position="289"/>
    </location>
</feature>
<feature type="strand" evidence="11">
    <location>
        <begin position="291"/>
        <end position="295"/>
    </location>
</feature>
<feature type="strand" evidence="11">
    <location>
        <begin position="300"/>
        <end position="305"/>
    </location>
</feature>
<feature type="strand" evidence="11">
    <location>
        <begin position="307"/>
        <end position="309"/>
    </location>
</feature>
<feature type="strand" evidence="11">
    <location>
        <begin position="312"/>
        <end position="317"/>
    </location>
</feature>
<feature type="strand" evidence="11">
    <location>
        <begin position="320"/>
        <end position="326"/>
    </location>
</feature>
<feature type="turn" evidence="11">
    <location>
        <begin position="327"/>
        <end position="330"/>
    </location>
</feature>
<feature type="strand" evidence="11">
    <location>
        <begin position="331"/>
        <end position="337"/>
    </location>
</feature>
<feature type="strand" evidence="11">
    <location>
        <begin position="355"/>
        <end position="358"/>
    </location>
</feature>
<feature type="strand" evidence="11">
    <location>
        <begin position="361"/>
        <end position="366"/>
    </location>
</feature>
<feature type="helix" evidence="11">
    <location>
        <begin position="367"/>
        <end position="369"/>
    </location>
</feature>
<feature type="strand" evidence="11">
    <location>
        <begin position="371"/>
        <end position="376"/>
    </location>
</feature>
<feature type="turn" evidence="11">
    <location>
        <begin position="377"/>
        <end position="379"/>
    </location>
</feature>
<feature type="strand" evidence="11">
    <location>
        <begin position="382"/>
        <end position="387"/>
    </location>
</feature>
<feature type="strand" evidence="11">
    <location>
        <begin position="392"/>
        <end position="401"/>
    </location>
</feature>
<name>AZTD_CITK8</name>
<evidence type="ECO:0000250" key="1">
    <source>
        <dbReference type="UniProtKB" id="A1B2F4"/>
    </source>
</evidence>
<evidence type="ECO:0000255" key="2"/>
<evidence type="ECO:0000256" key="3">
    <source>
        <dbReference type="SAM" id="MobiDB-lite"/>
    </source>
</evidence>
<evidence type="ECO:0000269" key="4">
    <source>
    </source>
</evidence>
<evidence type="ECO:0000303" key="5">
    <source>
    </source>
</evidence>
<evidence type="ECO:0000305" key="6">
    <source>
    </source>
</evidence>
<evidence type="ECO:0000312" key="7">
    <source>
        <dbReference type="EMBL" id="ABV12098.1"/>
    </source>
</evidence>
<evidence type="ECO:0000312" key="8">
    <source>
        <dbReference type="Proteomes" id="UP000008148"/>
    </source>
</evidence>
<evidence type="ECO:0007744" key="9">
    <source>
        <dbReference type="PDB" id="6CMK"/>
    </source>
</evidence>
<evidence type="ECO:0007744" key="10">
    <source>
        <dbReference type="PDB" id="6N01"/>
    </source>
</evidence>
<evidence type="ECO:0007829" key="11">
    <source>
        <dbReference type="PDB" id="6CMK"/>
    </source>
</evidence>
<evidence type="ECO:0007829" key="12">
    <source>
        <dbReference type="PDB" id="6N01"/>
    </source>
</evidence>
<organism evidence="8">
    <name type="scientific">Citrobacter koseri (strain ATCC BAA-895 / CDC 4225-83 / SGSC4696)</name>
    <dbReference type="NCBI Taxonomy" id="290338"/>
    <lineage>
        <taxon>Bacteria</taxon>
        <taxon>Pseudomonadati</taxon>
        <taxon>Pseudomonadota</taxon>
        <taxon>Gammaproteobacteria</taxon>
        <taxon>Enterobacterales</taxon>
        <taxon>Enterobacteriaceae</taxon>
        <taxon>Citrobacter</taxon>
    </lineage>
</organism>
<gene>
    <name evidence="5" type="primary">aztD</name>
    <name evidence="7" type="ordered locus">CKO_00948</name>
</gene>